<comment type="function">
    <text evidence="1">Catalyzes the conversion of dihydroorotate to orotate with quinone as electron acceptor.</text>
</comment>
<comment type="catalytic activity">
    <reaction>
        <text>(S)-dihydroorotate + a quinone = orotate + a quinol</text>
        <dbReference type="Rhea" id="RHEA:30187"/>
        <dbReference type="ChEBI" id="CHEBI:24646"/>
        <dbReference type="ChEBI" id="CHEBI:30839"/>
        <dbReference type="ChEBI" id="CHEBI:30864"/>
        <dbReference type="ChEBI" id="CHEBI:132124"/>
        <dbReference type="EC" id="1.3.5.2"/>
    </reaction>
</comment>
<comment type="cofactor">
    <cofactor evidence="1">
        <name>FMN</name>
        <dbReference type="ChEBI" id="CHEBI:58210"/>
    </cofactor>
    <text evidence="1">Binds 1 FMN per subunit.</text>
</comment>
<comment type="pathway">
    <text>Pyrimidine metabolism; UMP biosynthesis via de novo pathway; orotate from (S)-dihydroorotate (quinone route): step 1/1.</text>
</comment>
<comment type="subunit">
    <text evidence="1">Monomer.</text>
</comment>
<comment type="subcellular location">
    <subcellularLocation>
        <location evidence="1">Cell membrane</location>
        <topology evidence="1">Peripheral membrane protein</topology>
    </subcellularLocation>
</comment>
<comment type="similarity">
    <text evidence="2">Belongs to the dihydroorotate dehydrogenase family. Type 2 subfamily.</text>
</comment>
<feature type="chain" id="PRO_0000148436" description="Dihydroorotate dehydrogenase (quinone)">
    <location>
        <begin position="1"/>
        <end position="369"/>
    </location>
</feature>
<feature type="active site" description="Nucleophile" evidence="1">
    <location>
        <position position="190"/>
    </location>
</feature>
<feature type="binding site" evidence="1">
    <location>
        <begin position="76"/>
        <end position="80"/>
    </location>
    <ligand>
        <name>FMN</name>
        <dbReference type="ChEBI" id="CHEBI:58210"/>
    </ligand>
</feature>
<feature type="binding site" evidence="1">
    <location>
        <position position="80"/>
    </location>
    <ligand>
        <name>substrate</name>
    </ligand>
</feature>
<feature type="binding site" evidence="1">
    <location>
        <position position="100"/>
    </location>
    <ligand>
        <name>FMN</name>
        <dbReference type="ChEBI" id="CHEBI:58210"/>
    </ligand>
</feature>
<feature type="binding site" evidence="1">
    <location>
        <begin position="125"/>
        <end position="129"/>
    </location>
    <ligand>
        <name>substrate</name>
    </ligand>
</feature>
<feature type="binding site" evidence="1">
    <location>
        <position position="154"/>
    </location>
    <ligand>
        <name>FMN</name>
        <dbReference type="ChEBI" id="CHEBI:58210"/>
    </ligand>
</feature>
<feature type="binding site" evidence="1">
    <location>
        <position position="187"/>
    </location>
    <ligand>
        <name>FMN</name>
        <dbReference type="ChEBI" id="CHEBI:58210"/>
    </ligand>
</feature>
<feature type="binding site" evidence="1">
    <location>
        <position position="187"/>
    </location>
    <ligand>
        <name>substrate</name>
    </ligand>
</feature>
<feature type="binding site" evidence="1">
    <location>
        <position position="192"/>
    </location>
    <ligand>
        <name>substrate</name>
    </ligand>
</feature>
<feature type="binding site" evidence="1">
    <location>
        <position position="232"/>
    </location>
    <ligand>
        <name>FMN</name>
        <dbReference type="ChEBI" id="CHEBI:58210"/>
    </ligand>
</feature>
<feature type="binding site" evidence="1">
    <location>
        <position position="260"/>
    </location>
    <ligand>
        <name>FMN</name>
        <dbReference type="ChEBI" id="CHEBI:58210"/>
    </ligand>
</feature>
<feature type="binding site" evidence="1">
    <location>
        <begin position="261"/>
        <end position="262"/>
    </location>
    <ligand>
        <name>substrate</name>
    </ligand>
</feature>
<feature type="binding site" evidence="1">
    <location>
        <position position="282"/>
    </location>
    <ligand>
        <name>FMN</name>
        <dbReference type="ChEBI" id="CHEBI:58210"/>
    </ligand>
</feature>
<feature type="binding site" evidence="1">
    <location>
        <position position="311"/>
    </location>
    <ligand>
        <name>FMN</name>
        <dbReference type="ChEBI" id="CHEBI:58210"/>
    </ligand>
</feature>
<feature type="binding site" evidence="1">
    <location>
        <begin position="332"/>
        <end position="333"/>
    </location>
    <ligand>
        <name>FMN</name>
        <dbReference type="ChEBI" id="CHEBI:58210"/>
    </ligand>
</feature>
<organism>
    <name type="scientific">Deinococcus radiodurans (strain ATCC 13939 / DSM 20539 / JCM 16871 / CCUG 27074 / LMG 4051 / NBRC 15346 / NCIMB 9279 / VKM B-1422 / R1)</name>
    <dbReference type="NCBI Taxonomy" id="243230"/>
    <lineage>
        <taxon>Bacteria</taxon>
        <taxon>Thermotogati</taxon>
        <taxon>Deinococcota</taxon>
        <taxon>Deinococci</taxon>
        <taxon>Deinococcales</taxon>
        <taxon>Deinococcaceae</taxon>
        <taxon>Deinococcus</taxon>
    </lineage>
</organism>
<dbReference type="EC" id="1.3.5.2"/>
<dbReference type="EMBL" id="AE000513">
    <property type="protein sequence ID" value="AAF10081.1"/>
    <property type="molecule type" value="Genomic_DNA"/>
</dbReference>
<dbReference type="PIR" id="B75511">
    <property type="entry name" value="B75511"/>
</dbReference>
<dbReference type="RefSeq" id="NP_294224.1">
    <property type="nucleotide sequence ID" value="NC_001263.1"/>
</dbReference>
<dbReference type="RefSeq" id="WP_010887146.1">
    <property type="nucleotide sequence ID" value="NC_001263.1"/>
</dbReference>
<dbReference type="SMR" id="Q9RX14"/>
<dbReference type="FunCoup" id="Q9RX14">
    <property type="interactions" value="479"/>
</dbReference>
<dbReference type="STRING" id="243230.DR_0501"/>
<dbReference type="PaxDb" id="243230-DR_0501"/>
<dbReference type="EnsemblBacteria" id="AAF10081">
    <property type="protein sequence ID" value="AAF10081"/>
    <property type="gene ID" value="DR_0501"/>
</dbReference>
<dbReference type="GeneID" id="69516738"/>
<dbReference type="KEGG" id="dra:DR_0501"/>
<dbReference type="PATRIC" id="fig|243230.17.peg.679"/>
<dbReference type="eggNOG" id="COG0167">
    <property type="taxonomic scope" value="Bacteria"/>
</dbReference>
<dbReference type="HOGENOM" id="CLU_013640_2_1_0"/>
<dbReference type="InParanoid" id="Q9RX14"/>
<dbReference type="OrthoDB" id="9802377at2"/>
<dbReference type="UniPathway" id="UPA00070">
    <property type="reaction ID" value="UER00946"/>
</dbReference>
<dbReference type="Proteomes" id="UP000002524">
    <property type="component" value="Chromosome 1"/>
</dbReference>
<dbReference type="GO" id="GO:0005737">
    <property type="term" value="C:cytoplasm"/>
    <property type="evidence" value="ECO:0007669"/>
    <property type="project" value="InterPro"/>
</dbReference>
<dbReference type="GO" id="GO:0005886">
    <property type="term" value="C:plasma membrane"/>
    <property type="evidence" value="ECO:0007669"/>
    <property type="project" value="UniProtKB-SubCell"/>
</dbReference>
<dbReference type="GO" id="GO:0106430">
    <property type="term" value="F:dihydroorotate dehydrogenase (quinone) activity"/>
    <property type="evidence" value="ECO:0007669"/>
    <property type="project" value="UniProtKB-EC"/>
</dbReference>
<dbReference type="GO" id="GO:0004152">
    <property type="term" value="F:dihydroorotate dehydrogenase activity"/>
    <property type="evidence" value="ECO:0000318"/>
    <property type="project" value="GO_Central"/>
</dbReference>
<dbReference type="GO" id="GO:0006207">
    <property type="term" value="P:'de novo' pyrimidine nucleobase biosynthetic process"/>
    <property type="evidence" value="ECO:0000318"/>
    <property type="project" value="GO_Central"/>
</dbReference>
<dbReference type="GO" id="GO:0044205">
    <property type="term" value="P:'de novo' UMP biosynthetic process"/>
    <property type="evidence" value="ECO:0007669"/>
    <property type="project" value="UniProtKB-UniRule"/>
</dbReference>
<dbReference type="GO" id="GO:0009220">
    <property type="term" value="P:pyrimidine ribonucleotide biosynthetic process"/>
    <property type="evidence" value="ECO:0000318"/>
    <property type="project" value="GO_Central"/>
</dbReference>
<dbReference type="CDD" id="cd04738">
    <property type="entry name" value="DHOD_2_like"/>
    <property type="match status" value="1"/>
</dbReference>
<dbReference type="FunFam" id="3.20.20.70:FF:000123">
    <property type="entry name" value="Dihydroorotate dehydrogenase (quinone)"/>
    <property type="match status" value="1"/>
</dbReference>
<dbReference type="Gene3D" id="3.20.20.70">
    <property type="entry name" value="Aldolase class I"/>
    <property type="match status" value="1"/>
</dbReference>
<dbReference type="HAMAP" id="MF_00225">
    <property type="entry name" value="DHO_dh_type2"/>
    <property type="match status" value="1"/>
</dbReference>
<dbReference type="InterPro" id="IPR013785">
    <property type="entry name" value="Aldolase_TIM"/>
</dbReference>
<dbReference type="InterPro" id="IPR050074">
    <property type="entry name" value="DHO_dehydrogenase"/>
</dbReference>
<dbReference type="InterPro" id="IPR005719">
    <property type="entry name" value="Dihydroorotate_DH_2"/>
</dbReference>
<dbReference type="InterPro" id="IPR005720">
    <property type="entry name" value="Dihydroorotate_DH_cat"/>
</dbReference>
<dbReference type="InterPro" id="IPR001295">
    <property type="entry name" value="Dihydroorotate_DH_CS"/>
</dbReference>
<dbReference type="NCBIfam" id="NF003645">
    <property type="entry name" value="PRK05286.1-2"/>
    <property type="match status" value="1"/>
</dbReference>
<dbReference type="NCBIfam" id="NF003652">
    <property type="entry name" value="PRK05286.2-5"/>
    <property type="match status" value="1"/>
</dbReference>
<dbReference type="NCBIfam" id="TIGR01036">
    <property type="entry name" value="pyrD_sub2"/>
    <property type="match status" value="1"/>
</dbReference>
<dbReference type="PANTHER" id="PTHR48109:SF4">
    <property type="entry name" value="DIHYDROOROTATE DEHYDROGENASE (QUINONE), MITOCHONDRIAL"/>
    <property type="match status" value="1"/>
</dbReference>
<dbReference type="PANTHER" id="PTHR48109">
    <property type="entry name" value="DIHYDROOROTATE DEHYDROGENASE (QUINONE), MITOCHONDRIAL-RELATED"/>
    <property type="match status" value="1"/>
</dbReference>
<dbReference type="Pfam" id="PF01180">
    <property type="entry name" value="DHO_dh"/>
    <property type="match status" value="1"/>
</dbReference>
<dbReference type="SUPFAM" id="SSF51395">
    <property type="entry name" value="FMN-linked oxidoreductases"/>
    <property type="match status" value="1"/>
</dbReference>
<dbReference type="PROSITE" id="PS00911">
    <property type="entry name" value="DHODEHASE_1"/>
    <property type="match status" value="1"/>
</dbReference>
<dbReference type="PROSITE" id="PS00912">
    <property type="entry name" value="DHODEHASE_2"/>
    <property type="match status" value="1"/>
</dbReference>
<reference key="1">
    <citation type="journal article" date="1999" name="Science">
        <title>Genome sequence of the radioresistant bacterium Deinococcus radiodurans R1.</title>
        <authorList>
            <person name="White O."/>
            <person name="Eisen J.A."/>
            <person name="Heidelberg J.F."/>
            <person name="Hickey E.K."/>
            <person name="Peterson J.D."/>
            <person name="Dodson R.J."/>
            <person name="Haft D.H."/>
            <person name="Gwinn M.L."/>
            <person name="Nelson W.C."/>
            <person name="Richardson D.L."/>
            <person name="Moffat K.S."/>
            <person name="Qin H."/>
            <person name="Jiang L."/>
            <person name="Pamphile W."/>
            <person name="Crosby M."/>
            <person name="Shen M."/>
            <person name="Vamathevan J.J."/>
            <person name="Lam P."/>
            <person name="McDonald L.A."/>
            <person name="Utterback T.R."/>
            <person name="Zalewski C."/>
            <person name="Makarova K.S."/>
            <person name="Aravind L."/>
            <person name="Daly M.J."/>
            <person name="Minton K.W."/>
            <person name="Fleischmann R.D."/>
            <person name="Ketchum K.A."/>
            <person name="Nelson K.E."/>
            <person name="Salzberg S.L."/>
            <person name="Smith H.O."/>
            <person name="Venter J.C."/>
            <person name="Fraser C.M."/>
        </authorList>
    </citation>
    <scope>NUCLEOTIDE SEQUENCE [LARGE SCALE GENOMIC DNA]</scope>
    <source>
        <strain>ATCC 13939 / DSM 20539 / JCM 16871 / CCUG 27074 / LMG 4051 / NBRC 15346 / NCIMB 9279 / VKM B-1422 / R1</strain>
    </source>
</reference>
<name>PYRD_DEIRA</name>
<proteinExistence type="inferred from homology"/>
<protein>
    <recommendedName>
        <fullName>Dihydroorotate dehydrogenase (quinone)</fullName>
        <ecNumber>1.3.5.2</ecNumber>
    </recommendedName>
    <alternativeName>
        <fullName>DHOdehase</fullName>
        <shortName>DHOD</shortName>
        <shortName>DHODase</shortName>
    </alternativeName>
    <alternativeName>
        <fullName>Dihydroorotate oxidase</fullName>
    </alternativeName>
</protein>
<accession>Q9RX14</accession>
<keyword id="KW-1003">Cell membrane</keyword>
<keyword id="KW-0285">Flavoprotein</keyword>
<keyword id="KW-0288">FMN</keyword>
<keyword id="KW-0472">Membrane</keyword>
<keyword id="KW-0560">Oxidoreductase</keyword>
<keyword id="KW-0665">Pyrimidine biosynthesis</keyword>
<keyword id="KW-1185">Reference proteome</keyword>
<sequence>MYQTVRPLLFRLDAEDAHHLTLRGLELASGVPLLPRLARTLTVPGTQGPGDAALRRTLWGQTPSEQTFESPLGLAAGLDKNAQAVPAFTAFGFGFVEVGTVTPLAQSGNERPRLFRLPEDEALINRMGFNNGGTAAMHARLAVLTDRAAPVWVNIGKNKVTPNEDAAEDYRKCVRALGDLADAFVVNVSSPNTPGLRALQAADDLAALVRAVLDEVEAGRVRTLRRPPVLVKLAPDLHPADFEASVGAVLDAGASGLIISNTTLSRGGLSHPNREQAGGLSGRPLTDRSTELVRDAYRLTRGQVPIVGVGGVFSAEDAYAKLLAGADLVEVYSALIYRGPGLVREINAGLVKLLERDGVRNIADVVGQG</sequence>
<evidence type="ECO:0000250" key="1"/>
<evidence type="ECO:0000305" key="2"/>
<gene>
    <name type="primary">pyrD</name>
    <name type="ordered locus">DR_0501</name>
</gene>